<proteinExistence type="inferred from homology"/>
<name>RPIA_ERWT9</name>
<accession>B2VF17</accession>
<reference key="1">
    <citation type="journal article" date="2008" name="Environ. Microbiol.">
        <title>The genome of Erwinia tasmaniensis strain Et1/99, a non-pathogenic bacterium in the genus Erwinia.</title>
        <authorList>
            <person name="Kube M."/>
            <person name="Migdoll A.M."/>
            <person name="Mueller I."/>
            <person name="Kuhl H."/>
            <person name="Beck A."/>
            <person name="Reinhardt R."/>
            <person name="Geider K."/>
        </authorList>
    </citation>
    <scope>NUCLEOTIDE SEQUENCE [LARGE SCALE GENOMIC DNA]</scope>
    <source>
        <strain>DSM 17950 / CFBP 7177 / CIP 109463 / NCPPB 4357 / Et1/99</strain>
    </source>
</reference>
<organism>
    <name type="scientific">Erwinia tasmaniensis (strain DSM 17950 / CFBP 7177 / CIP 109463 / NCPPB 4357 / Et1/99)</name>
    <dbReference type="NCBI Taxonomy" id="465817"/>
    <lineage>
        <taxon>Bacteria</taxon>
        <taxon>Pseudomonadati</taxon>
        <taxon>Pseudomonadota</taxon>
        <taxon>Gammaproteobacteria</taxon>
        <taxon>Enterobacterales</taxon>
        <taxon>Erwiniaceae</taxon>
        <taxon>Erwinia</taxon>
    </lineage>
</organism>
<comment type="function">
    <text evidence="1">Catalyzes the reversible conversion of ribose-5-phosphate to ribulose 5-phosphate.</text>
</comment>
<comment type="catalytic activity">
    <reaction evidence="1">
        <text>aldehydo-D-ribose 5-phosphate = D-ribulose 5-phosphate</text>
        <dbReference type="Rhea" id="RHEA:14657"/>
        <dbReference type="ChEBI" id="CHEBI:58121"/>
        <dbReference type="ChEBI" id="CHEBI:58273"/>
        <dbReference type="EC" id="5.3.1.6"/>
    </reaction>
</comment>
<comment type="pathway">
    <text evidence="1">Carbohydrate degradation; pentose phosphate pathway; D-ribose 5-phosphate from D-ribulose 5-phosphate (non-oxidative stage): step 1/1.</text>
</comment>
<comment type="subunit">
    <text evidence="1">Homodimer.</text>
</comment>
<comment type="similarity">
    <text evidence="1">Belongs to the ribose 5-phosphate isomerase family.</text>
</comment>
<protein>
    <recommendedName>
        <fullName evidence="1">Ribose-5-phosphate isomerase A</fullName>
        <ecNumber evidence="1">5.3.1.6</ecNumber>
    </recommendedName>
    <alternativeName>
        <fullName evidence="1">Phosphoriboisomerase A</fullName>
        <shortName evidence="1">PRI</shortName>
    </alternativeName>
</protein>
<feature type="chain" id="PRO_1000097665" description="Ribose-5-phosphate isomerase A">
    <location>
        <begin position="1"/>
        <end position="219"/>
    </location>
</feature>
<feature type="active site" description="Proton acceptor" evidence="1">
    <location>
        <position position="103"/>
    </location>
</feature>
<feature type="binding site" evidence="1">
    <location>
        <begin position="28"/>
        <end position="31"/>
    </location>
    <ligand>
        <name>substrate</name>
    </ligand>
</feature>
<feature type="binding site" evidence="1">
    <location>
        <begin position="81"/>
        <end position="84"/>
    </location>
    <ligand>
        <name>substrate</name>
    </ligand>
</feature>
<feature type="binding site" evidence="1">
    <location>
        <begin position="94"/>
        <end position="97"/>
    </location>
    <ligand>
        <name>substrate</name>
    </ligand>
</feature>
<feature type="binding site" evidence="1">
    <location>
        <position position="121"/>
    </location>
    <ligand>
        <name>substrate</name>
    </ligand>
</feature>
<keyword id="KW-0413">Isomerase</keyword>
<keyword id="KW-1185">Reference proteome</keyword>
<dbReference type="EC" id="5.3.1.6" evidence="1"/>
<dbReference type="EMBL" id="CU468135">
    <property type="protein sequence ID" value="CAO97854.1"/>
    <property type="molecule type" value="Genomic_DNA"/>
</dbReference>
<dbReference type="RefSeq" id="WP_012442511.1">
    <property type="nucleotide sequence ID" value="NC_010694.1"/>
</dbReference>
<dbReference type="SMR" id="B2VF17"/>
<dbReference type="STRING" id="465817.ETA_28080"/>
<dbReference type="KEGG" id="eta:ETA_28080"/>
<dbReference type="eggNOG" id="COG0120">
    <property type="taxonomic scope" value="Bacteria"/>
</dbReference>
<dbReference type="HOGENOM" id="CLU_056590_1_1_6"/>
<dbReference type="OrthoDB" id="5870696at2"/>
<dbReference type="UniPathway" id="UPA00115">
    <property type="reaction ID" value="UER00412"/>
</dbReference>
<dbReference type="Proteomes" id="UP000001726">
    <property type="component" value="Chromosome"/>
</dbReference>
<dbReference type="GO" id="GO:0005829">
    <property type="term" value="C:cytosol"/>
    <property type="evidence" value="ECO:0007669"/>
    <property type="project" value="TreeGrafter"/>
</dbReference>
<dbReference type="GO" id="GO:0004751">
    <property type="term" value="F:ribose-5-phosphate isomerase activity"/>
    <property type="evidence" value="ECO:0007669"/>
    <property type="project" value="UniProtKB-UniRule"/>
</dbReference>
<dbReference type="GO" id="GO:0006014">
    <property type="term" value="P:D-ribose metabolic process"/>
    <property type="evidence" value="ECO:0007669"/>
    <property type="project" value="TreeGrafter"/>
</dbReference>
<dbReference type="GO" id="GO:0009052">
    <property type="term" value="P:pentose-phosphate shunt, non-oxidative branch"/>
    <property type="evidence" value="ECO:0007669"/>
    <property type="project" value="UniProtKB-UniRule"/>
</dbReference>
<dbReference type="CDD" id="cd01398">
    <property type="entry name" value="RPI_A"/>
    <property type="match status" value="1"/>
</dbReference>
<dbReference type="FunFam" id="3.30.70.260:FF:000004">
    <property type="entry name" value="Ribose-5-phosphate isomerase A"/>
    <property type="match status" value="1"/>
</dbReference>
<dbReference type="FunFam" id="3.40.50.1360:FF:000001">
    <property type="entry name" value="Ribose-5-phosphate isomerase A"/>
    <property type="match status" value="1"/>
</dbReference>
<dbReference type="Gene3D" id="3.30.70.260">
    <property type="match status" value="1"/>
</dbReference>
<dbReference type="Gene3D" id="3.40.50.1360">
    <property type="match status" value="1"/>
</dbReference>
<dbReference type="HAMAP" id="MF_00170">
    <property type="entry name" value="Rib_5P_isom_A"/>
    <property type="match status" value="1"/>
</dbReference>
<dbReference type="InterPro" id="IPR037171">
    <property type="entry name" value="NagB/RpiA_transferase-like"/>
</dbReference>
<dbReference type="InterPro" id="IPR020672">
    <property type="entry name" value="Ribose5P_isomerase_typA_subgr"/>
</dbReference>
<dbReference type="InterPro" id="IPR004788">
    <property type="entry name" value="Ribose5P_isomerase_type_A"/>
</dbReference>
<dbReference type="NCBIfam" id="NF001924">
    <property type="entry name" value="PRK00702.1"/>
    <property type="match status" value="1"/>
</dbReference>
<dbReference type="NCBIfam" id="TIGR00021">
    <property type="entry name" value="rpiA"/>
    <property type="match status" value="1"/>
</dbReference>
<dbReference type="PANTHER" id="PTHR11934">
    <property type="entry name" value="RIBOSE-5-PHOSPHATE ISOMERASE"/>
    <property type="match status" value="1"/>
</dbReference>
<dbReference type="PANTHER" id="PTHR11934:SF0">
    <property type="entry name" value="RIBOSE-5-PHOSPHATE ISOMERASE"/>
    <property type="match status" value="1"/>
</dbReference>
<dbReference type="Pfam" id="PF06026">
    <property type="entry name" value="Rib_5-P_isom_A"/>
    <property type="match status" value="1"/>
</dbReference>
<dbReference type="SUPFAM" id="SSF75445">
    <property type="entry name" value="D-ribose-5-phosphate isomerase (RpiA), lid domain"/>
    <property type="match status" value="1"/>
</dbReference>
<dbReference type="SUPFAM" id="SSF100950">
    <property type="entry name" value="NagB/RpiA/CoA transferase-like"/>
    <property type="match status" value="1"/>
</dbReference>
<sequence length="219" mass="23198">MTQDELKKAVGWAALDYVTPGTIVGVGTGSTAAHFIDALASIKHQIEGTVSSSEMSTARLKAYGIPVFDLNEIDALSLYVDGADEINGQMQMIKGGGAALTREKIIAAVADRFICIADESKQVDVLGHFPLPVEVIPMARSYVARELVKLGGLPEYRQDVITDNGNIILDVYNLSIIDPIRLETAINALTGVVTVGLFAARGADVALIGTADGVKTIKK</sequence>
<gene>
    <name evidence="1" type="primary">rpiA</name>
    <name type="ordered locus">ETA_28080</name>
</gene>
<evidence type="ECO:0000255" key="1">
    <source>
        <dbReference type="HAMAP-Rule" id="MF_00170"/>
    </source>
</evidence>